<dbReference type="EC" id="3.1.1.4"/>
<dbReference type="EMBL" id="DQ090660">
    <property type="protein sequence ID" value="AAZ53182.1"/>
    <property type="molecule type" value="mRNA"/>
</dbReference>
<dbReference type="SMR" id="A8CG89"/>
<dbReference type="GO" id="GO:0005576">
    <property type="term" value="C:extracellular region"/>
    <property type="evidence" value="ECO:0007669"/>
    <property type="project" value="UniProtKB-SubCell"/>
</dbReference>
<dbReference type="GO" id="GO:0005509">
    <property type="term" value="F:calcium ion binding"/>
    <property type="evidence" value="ECO:0007669"/>
    <property type="project" value="InterPro"/>
</dbReference>
<dbReference type="GO" id="GO:0047498">
    <property type="term" value="F:calcium-dependent phospholipase A2 activity"/>
    <property type="evidence" value="ECO:0007669"/>
    <property type="project" value="TreeGrafter"/>
</dbReference>
<dbReference type="GO" id="GO:0005543">
    <property type="term" value="F:phospholipid binding"/>
    <property type="evidence" value="ECO:0007669"/>
    <property type="project" value="TreeGrafter"/>
</dbReference>
<dbReference type="GO" id="GO:0090729">
    <property type="term" value="F:toxin activity"/>
    <property type="evidence" value="ECO:0007669"/>
    <property type="project" value="UniProtKB-KW"/>
</dbReference>
<dbReference type="GO" id="GO:0050482">
    <property type="term" value="P:arachidonate secretion"/>
    <property type="evidence" value="ECO:0007669"/>
    <property type="project" value="InterPro"/>
</dbReference>
<dbReference type="GO" id="GO:0016042">
    <property type="term" value="P:lipid catabolic process"/>
    <property type="evidence" value="ECO:0007669"/>
    <property type="project" value="UniProtKB-KW"/>
</dbReference>
<dbReference type="GO" id="GO:0042130">
    <property type="term" value="P:negative regulation of T cell proliferation"/>
    <property type="evidence" value="ECO:0007669"/>
    <property type="project" value="TreeGrafter"/>
</dbReference>
<dbReference type="GO" id="GO:0006644">
    <property type="term" value="P:phospholipid metabolic process"/>
    <property type="evidence" value="ECO:0007669"/>
    <property type="project" value="InterPro"/>
</dbReference>
<dbReference type="CDD" id="cd00125">
    <property type="entry name" value="PLA2c"/>
    <property type="match status" value="1"/>
</dbReference>
<dbReference type="FunFam" id="1.20.90.10:FF:000001">
    <property type="entry name" value="Basic phospholipase A2 homolog"/>
    <property type="match status" value="1"/>
</dbReference>
<dbReference type="Gene3D" id="1.20.90.10">
    <property type="entry name" value="Phospholipase A2 domain"/>
    <property type="match status" value="1"/>
</dbReference>
<dbReference type="InterPro" id="IPR001211">
    <property type="entry name" value="PLipase_A2"/>
</dbReference>
<dbReference type="InterPro" id="IPR033112">
    <property type="entry name" value="PLipase_A2_Asp_AS"/>
</dbReference>
<dbReference type="InterPro" id="IPR016090">
    <property type="entry name" value="PLipase_A2_dom"/>
</dbReference>
<dbReference type="InterPro" id="IPR036444">
    <property type="entry name" value="PLipase_A2_dom_sf"/>
</dbReference>
<dbReference type="InterPro" id="IPR033113">
    <property type="entry name" value="PLipase_A2_His_AS"/>
</dbReference>
<dbReference type="PANTHER" id="PTHR11716">
    <property type="entry name" value="PHOSPHOLIPASE A2 FAMILY MEMBER"/>
    <property type="match status" value="1"/>
</dbReference>
<dbReference type="PANTHER" id="PTHR11716:SF9">
    <property type="entry name" value="PHOSPHOLIPASE A2, MEMBRANE ASSOCIATED"/>
    <property type="match status" value="1"/>
</dbReference>
<dbReference type="Pfam" id="PF00068">
    <property type="entry name" value="Phospholip_A2_1"/>
    <property type="match status" value="1"/>
</dbReference>
<dbReference type="PRINTS" id="PR00389">
    <property type="entry name" value="PHPHLIPASEA2"/>
</dbReference>
<dbReference type="SMART" id="SM00085">
    <property type="entry name" value="PA2c"/>
    <property type="match status" value="1"/>
</dbReference>
<dbReference type="SUPFAM" id="SSF48619">
    <property type="entry name" value="Phospholipase A2, PLA2"/>
    <property type="match status" value="1"/>
</dbReference>
<dbReference type="PROSITE" id="PS00119">
    <property type="entry name" value="PA2_ASP"/>
    <property type="match status" value="1"/>
</dbReference>
<dbReference type="PROSITE" id="PS00118">
    <property type="entry name" value="PA2_HIS"/>
    <property type="match status" value="1"/>
</dbReference>
<feature type="signal peptide" evidence="4">
    <location>
        <begin position="1"/>
        <end position="16"/>
    </location>
</feature>
<feature type="chain" id="PRO_0000419217" description="Basic phospholipase A2 Drk-b1">
    <location>
        <begin position="17"/>
        <end position="138"/>
    </location>
</feature>
<feature type="active site" evidence="1">
    <location>
        <position position="63"/>
    </location>
</feature>
<feature type="active site" evidence="1">
    <location>
        <position position="105"/>
    </location>
</feature>
<feature type="binding site" evidence="1">
    <location>
        <position position="43"/>
    </location>
    <ligand>
        <name>Ca(2+)</name>
        <dbReference type="ChEBI" id="CHEBI:29108"/>
    </ligand>
</feature>
<feature type="binding site" evidence="1">
    <location>
        <position position="45"/>
    </location>
    <ligand>
        <name>Ca(2+)</name>
        <dbReference type="ChEBI" id="CHEBI:29108"/>
    </ligand>
</feature>
<feature type="binding site" evidence="1">
    <location>
        <position position="47"/>
    </location>
    <ligand>
        <name>Ca(2+)</name>
        <dbReference type="ChEBI" id="CHEBI:29108"/>
    </ligand>
</feature>
<feature type="binding site" evidence="1">
    <location>
        <position position="64"/>
    </location>
    <ligand>
        <name>Ca(2+)</name>
        <dbReference type="ChEBI" id="CHEBI:29108"/>
    </ligand>
</feature>
<feature type="disulfide bond" evidence="1">
    <location>
        <begin position="42"/>
        <end position="131"/>
    </location>
</feature>
<feature type="disulfide bond" evidence="1">
    <location>
        <begin position="44"/>
        <end position="60"/>
    </location>
</feature>
<feature type="disulfide bond" evidence="1">
    <location>
        <begin position="59"/>
        <end position="111"/>
    </location>
</feature>
<feature type="disulfide bond" evidence="1">
    <location>
        <begin position="65"/>
        <end position="138"/>
    </location>
</feature>
<feature type="disulfide bond" evidence="1">
    <location>
        <begin position="66"/>
        <end position="104"/>
    </location>
</feature>
<feature type="disulfide bond" evidence="1">
    <location>
        <begin position="73"/>
        <end position="97"/>
    </location>
</feature>
<feature type="disulfide bond" evidence="1">
    <location>
        <begin position="91"/>
        <end position="102"/>
    </location>
</feature>
<feature type="sequence conflict" description="In Ref. 1; AA sequence." evidence="5" ref="1">
    <original>DA</original>
    <variation>NQ</variation>
    <location>
        <begin position="26"/>
        <end position="27"/>
    </location>
</feature>
<accession>A8CG89</accession>
<organism>
    <name type="scientific">Daboia russelii</name>
    <name type="common">Russel's viper</name>
    <name type="synonym">Vipera russelii</name>
    <dbReference type="NCBI Taxonomy" id="8707"/>
    <lineage>
        <taxon>Eukaryota</taxon>
        <taxon>Metazoa</taxon>
        <taxon>Chordata</taxon>
        <taxon>Craniata</taxon>
        <taxon>Vertebrata</taxon>
        <taxon>Euteleostomi</taxon>
        <taxon>Lepidosauria</taxon>
        <taxon>Squamata</taxon>
        <taxon>Bifurcata</taxon>
        <taxon>Unidentata</taxon>
        <taxon>Episquamata</taxon>
        <taxon>Toxicofera</taxon>
        <taxon>Serpentes</taxon>
        <taxon>Colubroidea</taxon>
        <taxon>Viperidae</taxon>
        <taxon>Viperinae</taxon>
        <taxon>Daboia</taxon>
    </lineage>
</organism>
<protein>
    <recommendedName>
        <fullName>Basic phospholipase A2 Drk-b1</fullName>
        <shortName>svPLA2</shortName>
        <ecNumber>3.1.1.4</ecNumber>
    </recommendedName>
    <alternativeName>
        <fullName>Phosphatidylcholine 2-acylhydrolase</fullName>
    </alternativeName>
</protein>
<name>PA2B1_DABRR</name>
<reference key="1">
    <citation type="journal article" date="2007" name="Biochim. Biophys. Acta">
        <title>Venom phospholipases of Russell's vipers from Myanmar and eastern India--cloning, characterization and phylogeographic analysis.</title>
        <authorList>
            <person name="Tsai I.-H."/>
            <person name="Tsai H.-Y."/>
            <person name="Wang Y.-M."/>
            <person name="Pe T."/>
            <person name="Warrell D.-A."/>
        </authorList>
    </citation>
    <scope>NUCLEOTIDE SEQUENCE [MRNA]</scope>
    <scope>PROTEIN SEQUENCE OF 17-27</scope>
    <scope>FUNCTION</scope>
    <scope>MASS SPECTROMETRY</scope>
    <source>
        <strain>Kolkata</strain>
        <tissue>Venom</tissue>
        <tissue>Venom gland</tissue>
    </source>
</reference>
<comment type="function">
    <text evidence="4">Exhibits high hydrolytic activities and shows strong preference for the anionic micelles (dPPC with deoxycholate) to the zwitterionic micelles (dPPC with Triton X-100). PLA2 catalyzes the calcium-dependent hydrolysis of the 2-acyl groups in 3-sn-phosphoglycerides.</text>
</comment>
<comment type="catalytic activity">
    <reaction evidence="2 3">
        <text>a 1,2-diacyl-sn-glycero-3-phosphocholine + H2O = a 1-acyl-sn-glycero-3-phosphocholine + a fatty acid + H(+)</text>
        <dbReference type="Rhea" id="RHEA:15801"/>
        <dbReference type="ChEBI" id="CHEBI:15377"/>
        <dbReference type="ChEBI" id="CHEBI:15378"/>
        <dbReference type="ChEBI" id="CHEBI:28868"/>
        <dbReference type="ChEBI" id="CHEBI:57643"/>
        <dbReference type="ChEBI" id="CHEBI:58168"/>
        <dbReference type="EC" id="3.1.1.4"/>
    </reaction>
</comment>
<comment type="cofactor">
    <cofactor evidence="1">
        <name>Ca(2+)</name>
        <dbReference type="ChEBI" id="CHEBI:29108"/>
    </cofactor>
    <text evidence="1">Binds 1 Ca(2+) ion.</text>
</comment>
<comment type="subcellular location">
    <subcellularLocation>
        <location>Secreted</location>
    </subcellularLocation>
</comment>
<comment type="tissue specificity">
    <text>Expressed by the venom gland.</text>
</comment>
<comment type="mass spectrometry" mass="14077.0" method="Electrospray" evidence="4"/>
<comment type="similarity">
    <text evidence="5">Belongs to the phospholipase A2 family. Group II subfamily. D49 sub-subfamily.</text>
</comment>
<evidence type="ECO:0000250" key="1"/>
<evidence type="ECO:0000255" key="2">
    <source>
        <dbReference type="PROSITE-ProRule" id="PRU10035"/>
    </source>
</evidence>
<evidence type="ECO:0000255" key="3">
    <source>
        <dbReference type="PROSITE-ProRule" id="PRU10036"/>
    </source>
</evidence>
<evidence type="ECO:0000269" key="4">
    <source>
    </source>
</evidence>
<evidence type="ECO:0000305" key="5"/>
<sequence length="138" mass="15864">MRTLWIVAMCLIGVEGNLFQFARMIDAKQEAFSFFKYISYGCYCGWGGQGTPKDASDRCCFVHDCCYARVKGCNPKLVEYSYSYRTGKIVCETYNRCKRAVCECDRVAAICLGQNVNTYNKGYMFLSSYYCRQKSEQC</sequence>
<keyword id="KW-0903">Direct protein sequencing</keyword>
<keyword id="KW-1015">Disulfide bond</keyword>
<keyword id="KW-0378">Hydrolase</keyword>
<keyword id="KW-0442">Lipid degradation</keyword>
<keyword id="KW-0443">Lipid metabolism</keyword>
<keyword id="KW-0479">Metal-binding</keyword>
<keyword id="KW-0964">Secreted</keyword>
<keyword id="KW-0732">Signal</keyword>
<keyword id="KW-0800">Toxin</keyword>
<proteinExistence type="evidence at protein level"/>